<protein>
    <recommendedName>
        <fullName evidence="3">Dermaseptin-N1</fullName>
        <shortName evidence="3">DRS-N1</shortName>
    </recommendedName>
    <alternativeName>
        <fullName evidence="2">Dermaseptin-H10</fullName>
        <shortName evidence="2">DRS-H10</shortName>
    </alternativeName>
</protein>
<accession>P0DTD4</accession>
<organism>
    <name type="scientific">Pithecopus nordestinus</name>
    <name type="common">Northeastern Brazilian leaf frog</name>
    <name type="synonym">Phyllomedusa nordestina</name>
    <dbReference type="NCBI Taxonomy" id="2034992"/>
    <lineage>
        <taxon>Eukaryota</taxon>
        <taxon>Metazoa</taxon>
        <taxon>Chordata</taxon>
        <taxon>Craniata</taxon>
        <taxon>Vertebrata</taxon>
        <taxon>Euteleostomi</taxon>
        <taxon>Amphibia</taxon>
        <taxon>Batrachia</taxon>
        <taxon>Anura</taxon>
        <taxon>Neobatrachia</taxon>
        <taxon>Hyloidea</taxon>
        <taxon>Hylidae</taxon>
        <taxon>Phyllomedusinae</taxon>
        <taxon>Pithecopus</taxon>
    </lineage>
</organism>
<keyword id="KW-0027">Amidation</keyword>
<keyword id="KW-0878">Amphibian defense peptide</keyword>
<keyword id="KW-0044">Antibiotic</keyword>
<keyword id="KW-0929">Antimicrobial</keyword>
<keyword id="KW-0903">Direct protein sequencing</keyword>
<keyword id="KW-0391">Immunity</keyword>
<keyword id="KW-0399">Innate immunity</keyword>
<keyword id="KW-0964">Secreted</keyword>
<proteinExistence type="evidence at protein level"/>
<sequence length="20" mass="1983">GLWSTIKNVAAAAGKAAIKL</sequence>
<reference key="1">
    <citation type="journal article" date="2013" name="Molecules">
        <title>The skin secretion of the amphibian Phyllomedusa nordestina: a source of antimicrobial and antiprotozoal peptides.</title>
        <authorList>
            <person name="Brand G.D."/>
            <person name="Santos R.C."/>
            <person name="Arake L.M."/>
            <person name="Silva V.G."/>
            <person name="Veras L.M."/>
            <person name="Costa V."/>
            <person name="Costa C.H."/>
            <person name="Kuckelhaus S.S."/>
            <person name="Alexandre J.G."/>
            <person name="Feio M.J."/>
            <person name="Leite J.R."/>
        </authorList>
    </citation>
    <scope>PROTEIN SEQUENCE</scope>
    <scope>FUNCTION</scope>
    <scope>MASS SPECTROMETRY</scope>
    <scope>AMIDATION AT LEU-20</scope>
    <scope>SYNTHESIS</scope>
    <source>
        <tissue>Skin secretion</tissue>
    </source>
</reference>
<comment type="function">
    <text evidence="1">Antimicrobial peptide with moderate activity against both Gram-positive and Gram-negative bacteria, and important activity against Leishmania species (L.amazonensis and L.infantum) (PubMed:23774944). Acts on both Leishmania promastigote and amastigote forms (PubMed:23774944). Shows activity against E.coli (MIC=17.8 uM), S.aureus (MIC=32.3 uM) and the phytopathogenic bacterium Xanthomonas axonopodis (MIC=2 uM) (PubMed:23774944). Shows low cytotoxicity against mammalian cells in models of peritoneal macrophages (PubMed:23774944).</text>
</comment>
<comment type="subcellular location">
    <subcellularLocation>
        <location evidence="1">Secreted</location>
    </subcellularLocation>
</comment>
<comment type="tissue specificity">
    <text evidence="4">Expressed by the skin glands.</text>
</comment>
<comment type="mass spectrometry" mass="1982.26" method="MALDI" evidence="1"/>
<comment type="similarity">
    <text evidence="3">Belongs to the frog skin active peptide (FSAP) family. Dermaseptin subfamily.</text>
</comment>
<comment type="caution">
    <text evidence="4">Sequence shown in this entry in copied from Fig.2, and not from Table 1, which differ.</text>
</comment>
<dbReference type="GO" id="GO:0005576">
    <property type="term" value="C:extracellular region"/>
    <property type="evidence" value="ECO:0007669"/>
    <property type="project" value="UniProtKB-SubCell"/>
</dbReference>
<dbReference type="GO" id="GO:0042742">
    <property type="term" value="P:defense response to bacterium"/>
    <property type="evidence" value="ECO:0007669"/>
    <property type="project" value="UniProtKB-KW"/>
</dbReference>
<dbReference type="GO" id="GO:0045087">
    <property type="term" value="P:innate immune response"/>
    <property type="evidence" value="ECO:0007669"/>
    <property type="project" value="UniProtKB-KW"/>
</dbReference>
<dbReference type="InterPro" id="IPR022731">
    <property type="entry name" value="Dermaseptin_dom"/>
</dbReference>
<dbReference type="Pfam" id="PF12121">
    <property type="entry name" value="DD_K"/>
    <property type="match status" value="1"/>
</dbReference>
<evidence type="ECO:0000269" key="1">
    <source>
    </source>
</evidence>
<evidence type="ECO:0000303" key="2">
    <source>
    </source>
</evidence>
<evidence type="ECO:0000305" key="3"/>
<evidence type="ECO:0000305" key="4">
    <source>
    </source>
</evidence>
<feature type="peptide" id="PRO_0000449580" description="Dermaseptin-N1" evidence="1">
    <location>
        <begin position="1"/>
        <end position="20"/>
    </location>
</feature>
<feature type="modified residue" description="Leucine amide" evidence="1">
    <location>
        <position position="20"/>
    </location>
</feature>
<name>DRS1_PITNO</name>